<sequence length="252" mass="29392">MEMKQISETTLKITISMDDLEERGMELKDFLIPQEKTEEFFYTVMDELDLPDNFKDSGMLSFRVTPRKDRLDVFVTKSDLNKEINFDDLADLGDVSQMTPEDFFKTIEKSMIEKGDVNAHEKLEKIEEMMEEAVDAVMTQNAEEQKEEESPFEPLDYVHYVLDFMTIQDAITFSKTVTFPIEASELYKSSDRYHMTILLDIQNQPSYYANVMYARLIEHALPGSKTRAYLQEHAHQLLEDHAVTELQKVELV</sequence>
<evidence type="ECO:0000255" key="1">
    <source>
        <dbReference type="HAMAP-Rule" id="MF_01124"/>
    </source>
</evidence>
<gene>
    <name evidence="1" type="primary">mecA</name>
    <name type="ordered locus">SUB0340</name>
</gene>
<protein>
    <recommendedName>
        <fullName evidence="1">Adapter protein MecA</fullName>
    </recommendedName>
</protein>
<accession>B9DTL0</accession>
<feature type="chain" id="PRO_1000164057" description="Adapter protein MecA">
    <location>
        <begin position="1"/>
        <end position="252"/>
    </location>
</feature>
<comment type="function">
    <text evidence="1">Enables the recognition and targeting of unfolded and aggregated proteins to the ClpC protease or to other proteins involved in proteolysis.</text>
</comment>
<comment type="subunit">
    <text evidence="1">Homodimer.</text>
</comment>
<comment type="domain">
    <text>The N-terminal domain probably binds unfolded/aggregated proteins; the C-terminal domain interacts with ClpC.</text>
</comment>
<comment type="similarity">
    <text evidence="1">Belongs to the MecA family.</text>
</comment>
<dbReference type="EMBL" id="AM946015">
    <property type="protein sequence ID" value="CAR40923.1"/>
    <property type="molecule type" value="Genomic_DNA"/>
</dbReference>
<dbReference type="RefSeq" id="WP_012657878.1">
    <property type="nucleotide sequence ID" value="NC_012004.1"/>
</dbReference>
<dbReference type="SMR" id="B9DTL0"/>
<dbReference type="STRING" id="218495.SUB0340"/>
<dbReference type="GeneID" id="93825638"/>
<dbReference type="KEGG" id="sub:SUB0340"/>
<dbReference type="eggNOG" id="COG4862">
    <property type="taxonomic scope" value="Bacteria"/>
</dbReference>
<dbReference type="HOGENOM" id="CLU_071496_1_0_9"/>
<dbReference type="OrthoDB" id="2360201at2"/>
<dbReference type="Proteomes" id="UP000000449">
    <property type="component" value="Chromosome"/>
</dbReference>
<dbReference type="GO" id="GO:0030674">
    <property type="term" value="F:protein-macromolecule adaptor activity"/>
    <property type="evidence" value="ECO:0007669"/>
    <property type="project" value="UniProtKB-UniRule"/>
</dbReference>
<dbReference type="Gene3D" id="3.30.70.1950">
    <property type="match status" value="1"/>
</dbReference>
<dbReference type="HAMAP" id="MF_01124">
    <property type="entry name" value="MecA"/>
    <property type="match status" value="1"/>
</dbReference>
<dbReference type="InterPro" id="IPR038471">
    <property type="entry name" value="MecA_C_sf"/>
</dbReference>
<dbReference type="InterPro" id="IPR008681">
    <property type="entry name" value="Neg-reg_MecA"/>
</dbReference>
<dbReference type="NCBIfam" id="NF002643">
    <property type="entry name" value="PRK02315.1-4"/>
    <property type="match status" value="1"/>
</dbReference>
<dbReference type="PANTHER" id="PTHR39161">
    <property type="entry name" value="ADAPTER PROTEIN MECA"/>
    <property type="match status" value="1"/>
</dbReference>
<dbReference type="PANTHER" id="PTHR39161:SF1">
    <property type="entry name" value="ADAPTER PROTEIN MECA 1"/>
    <property type="match status" value="1"/>
</dbReference>
<dbReference type="Pfam" id="PF05389">
    <property type="entry name" value="MecA"/>
    <property type="match status" value="1"/>
</dbReference>
<dbReference type="PIRSF" id="PIRSF029008">
    <property type="entry name" value="MecA"/>
    <property type="match status" value="1"/>
</dbReference>
<organism>
    <name type="scientific">Streptococcus uberis (strain ATCC BAA-854 / 0140J)</name>
    <dbReference type="NCBI Taxonomy" id="218495"/>
    <lineage>
        <taxon>Bacteria</taxon>
        <taxon>Bacillati</taxon>
        <taxon>Bacillota</taxon>
        <taxon>Bacilli</taxon>
        <taxon>Lactobacillales</taxon>
        <taxon>Streptococcaceae</taxon>
        <taxon>Streptococcus</taxon>
    </lineage>
</organism>
<keyword id="KW-1185">Reference proteome</keyword>
<proteinExistence type="inferred from homology"/>
<name>MECA_STRU0</name>
<reference key="1">
    <citation type="journal article" date="2009" name="BMC Genomics">
        <title>Evidence for niche adaptation in the genome of the bovine pathogen Streptococcus uberis.</title>
        <authorList>
            <person name="Ward P.N."/>
            <person name="Holden M.T.G."/>
            <person name="Leigh J.A."/>
            <person name="Lennard N."/>
            <person name="Bignell A."/>
            <person name="Barron A."/>
            <person name="Clark L."/>
            <person name="Quail M.A."/>
            <person name="Woodward J."/>
            <person name="Barrell B.G."/>
            <person name="Egan S.A."/>
            <person name="Field T.R."/>
            <person name="Maskell D."/>
            <person name="Kehoe M."/>
            <person name="Dowson C.G."/>
            <person name="Chanter N."/>
            <person name="Whatmore A.M."/>
            <person name="Bentley S.D."/>
            <person name="Parkhill J."/>
        </authorList>
    </citation>
    <scope>NUCLEOTIDE SEQUENCE [LARGE SCALE GENOMIC DNA]</scope>
    <source>
        <strain>ATCC BAA-854 / 0140J</strain>
    </source>
</reference>